<comment type="function">
    <text evidence="1">Catalyzes the formation of phosphatidylethanolamine (PtdEtn) from phosphatidylserine (PtdSer).</text>
</comment>
<comment type="catalytic activity">
    <reaction evidence="1">
        <text>a 1,2-diacyl-sn-glycero-3-phospho-L-serine + H(+) = a 1,2-diacyl-sn-glycero-3-phosphoethanolamine + CO2</text>
        <dbReference type="Rhea" id="RHEA:20828"/>
        <dbReference type="ChEBI" id="CHEBI:15378"/>
        <dbReference type="ChEBI" id="CHEBI:16526"/>
        <dbReference type="ChEBI" id="CHEBI:57262"/>
        <dbReference type="ChEBI" id="CHEBI:64612"/>
        <dbReference type="EC" id="4.1.1.65"/>
    </reaction>
</comment>
<comment type="cofactor">
    <cofactor evidence="1">
        <name>pyruvate</name>
        <dbReference type="ChEBI" id="CHEBI:15361"/>
    </cofactor>
    <text evidence="1">Binds 1 pyruvoyl group covalently per subunit.</text>
</comment>
<comment type="pathway">
    <text evidence="1">Phospholipid metabolism; phosphatidylethanolamine biosynthesis; phosphatidylethanolamine from CDP-diacylglycerol: step 2/2.</text>
</comment>
<comment type="subunit">
    <text evidence="1">Heterodimer of a large membrane-associated beta subunit and a small pyruvoyl-containing alpha subunit.</text>
</comment>
<comment type="subcellular location">
    <subcellularLocation>
        <location evidence="1">Cell membrane</location>
        <topology evidence="1">Peripheral membrane protein</topology>
    </subcellularLocation>
</comment>
<comment type="PTM">
    <text evidence="1">Is synthesized initially as an inactive proenzyme. Formation of the active enzyme involves a self-maturation process in which the active site pyruvoyl group is generated from an internal serine residue via an autocatalytic post-translational modification. Two non-identical subunits are generated from the proenzyme in this reaction, and the pyruvate is formed at the N-terminus of the alpha chain, which is derived from the carboxyl end of the proenzyme. The post-translation cleavage follows an unusual pathway, termed non-hydrolytic serinolysis, in which the side chain hydroxyl group of the serine supplies its oxygen atom to form the C-terminus of the beta chain, while the remainder of the serine residue undergoes an oxidative deamination to produce ammonia and the pyruvoyl prosthetic group on the alpha chain.</text>
</comment>
<comment type="similarity">
    <text evidence="1">Belongs to the phosphatidylserine decarboxylase family. PSD-A subfamily.</text>
</comment>
<evidence type="ECO:0000255" key="1">
    <source>
        <dbReference type="HAMAP-Rule" id="MF_00664"/>
    </source>
</evidence>
<feature type="chain" id="PRO_0000029751" description="Phosphatidylserine decarboxylase beta chain" evidence="1">
    <location>
        <begin position="1"/>
        <end position="196"/>
    </location>
</feature>
<feature type="chain" id="PRO_0000029752" description="Phosphatidylserine decarboxylase alpha chain" evidence="1">
    <location>
        <begin position="197"/>
        <end position="228"/>
    </location>
</feature>
<feature type="active site" description="Schiff-base intermediate with substrate; via pyruvic acid" evidence="1">
    <location>
        <position position="197"/>
    </location>
</feature>
<feature type="site" description="Cleavage (non-hydrolytic); by autocatalysis" evidence="1">
    <location>
        <begin position="196"/>
        <end position="197"/>
    </location>
</feature>
<feature type="modified residue" description="Pyruvic acid (Ser); by autocatalysis" evidence="1">
    <location>
        <position position="197"/>
    </location>
</feature>
<keyword id="KW-1003">Cell membrane</keyword>
<keyword id="KW-0210">Decarboxylase</keyword>
<keyword id="KW-0444">Lipid biosynthesis</keyword>
<keyword id="KW-0443">Lipid metabolism</keyword>
<keyword id="KW-0456">Lyase</keyword>
<keyword id="KW-0472">Membrane</keyword>
<keyword id="KW-0594">Phospholipid biosynthesis</keyword>
<keyword id="KW-1208">Phospholipid metabolism</keyword>
<keyword id="KW-0670">Pyruvate</keyword>
<keyword id="KW-1185">Reference proteome</keyword>
<keyword id="KW-0865">Zymogen</keyword>
<organism>
    <name type="scientific">Bacteroides thetaiotaomicron (strain ATCC 29148 / DSM 2079 / JCM 5827 / CCUG 10774 / NCTC 10582 / VPI-5482 / E50)</name>
    <dbReference type="NCBI Taxonomy" id="226186"/>
    <lineage>
        <taxon>Bacteria</taxon>
        <taxon>Pseudomonadati</taxon>
        <taxon>Bacteroidota</taxon>
        <taxon>Bacteroidia</taxon>
        <taxon>Bacteroidales</taxon>
        <taxon>Bacteroidaceae</taxon>
        <taxon>Bacteroides</taxon>
    </lineage>
</organism>
<reference key="1">
    <citation type="journal article" date="2003" name="Science">
        <title>A genomic view of the human-Bacteroides thetaiotaomicron symbiosis.</title>
        <authorList>
            <person name="Xu J."/>
            <person name="Bjursell M.K."/>
            <person name="Himrod J."/>
            <person name="Deng S."/>
            <person name="Carmichael L.K."/>
            <person name="Chiang H.C."/>
            <person name="Hooper L.V."/>
            <person name="Gordon J.I."/>
        </authorList>
    </citation>
    <scope>NUCLEOTIDE SEQUENCE [LARGE SCALE GENOMIC DNA]</scope>
    <source>
        <strain>ATCC 29148 / DSM 2079 / JCM 5827 / CCUG 10774 / NCTC 10582 / VPI-5482 / E50</strain>
    </source>
</reference>
<protein>
    <recommendedName>
        <fullName evidence="1">Phosphatidylserine decarboxylase proenzyme</fullName>
        <ecNumber evidence="1">4.1.1.65</ecNumber>
    </recommendedName>
    <component>
        <recommendedName>
            <fullName evidence="1">Phosphatidylserine decarboxylase alpha chain</fullName>
        </recommendedName>
    </component>
    <component>
        <recommendedName>
            <fullName evidence="1">Phosphatidylserine decarboxylase beta chain</fullName>
        </recommendedName>
    </component>
</protein>
<proteinExistence type="inferred from homology"/>
<sequence>MGRLKKLKKIRIHREGTHILWASFLLLLLINAALYWGIDCKIPFYVVAVASIAVYLLMVNFFRCPIRLFGKDTEKIVVAPADGKIVVIEEVDENEYFHDRRLMISIFMSIVNVHANWYPVDGTIKKVAHHNGNFMKAWLPKASTENERSTVVIETPEGVEVLTRQIAGAVARRIVTYAEVGEECYIDEHMGFIKFGSRVDVYLPLGTEVCVNMGQLTTGNQTVIAKLK</sequence>
<gene>
    <name evidence="1" type="primary">psd</name>
    <name type="ordered locus">BT_2231</name>
</gene>
<name>PSD_BACTN</name>
<accession>Q8A5K8</accession>
<dbReference type="EC" id="4.1.1.65" evidence="1"/>
<dbReference type="EMBL" id="AE015928">
    <property type="protein sequence ID" value="AAO77338.1"/>
    <property type="molecule type" value="Genomic_DNA"/>
</dbReference>
<dbReference type="RefSeq" id="NP_811144.1">
    <property type="nucleotide sequence ID" value="NC_004663.1"/>
</dbReference>
<dbReference type="RefSeq" id="WP_008759606.1">
    <property type="nucleotide sequence ID" value="NC_004663.1"/>
</dbReference>
<dbReference type="SMR" id="Q8A5K8"/>
<dbReference type="STRING" id="226186.BT_2231"/>
<dbReference type="PaxDb" id="226186-BT_2231"/>
<dbReference type="EnsemblBacteria" id="AAO77338">
    <property type="protein sequence ID" value="AAO77338"/>
    <property type="gene ID" value="BT_2231"/>
</dbReference>
<dbReference type="KEGG" id="bth:BT_2231"/>
<dbReference type="PATRIC" id="fig|226186.12.peg.2296"/>
<dbReference type="eggNOG" id="COG0688">
    <property type="taxonomic scope" value="Bacteria"/>
</dbReference>
<dbReference type="HOGENOM" id="CLU_072492_1_0_10"/>
<dbReference type="InParanoid" id="Q8A5K8"/>
<dbReference type="OrthoDB" id="9790893at2"/>
<dbReference type="UniPathway" id="UPA00558">
    <property type="reaction ID" value="UER00616"/>
</dbReference>
<dbReference type="Proteomes" id="UP000001414">
    <property type="component" value="Chromosome"/>
</dbReference>
<dbReference type="GO" id="GO:0005886">
    <property type="term" value="C:plasma membrane"/>
    <property type="evidence" value="ECO:0007669"/>
    <property type="project" value="UniProtKB-SubCell"/>
</dbReference>
<dbReference type="GO" id="GO:0004609">
    <property type="term" value="F:phosphatidylserine decarboxylase activity"/>
    <property type="evidence" value="ECO:0007669"/>
    <property type="project" value="UniProtKB-UniRule"/>
</dbReference>
<dbReference type="GO" id="GO:0006646">
    <property type="term" value="P:phosphatidylethanolamine biosynthetic process"/>
    <property type="evidence" value="ECO:0007669"/>
    <property type="project" value="UniProtKB-UniRule"/>
</dbReference>
<dbReference type="HAMAP" id="MF_00664">
    <property type="entry name" value="PS_decarb_PSD_A"/>
    <property type="match status" value="1"/>
</dbReference>
<dbReference type="InterPro" id="IPR003817">
    <property type="entry name" value="PS_Dcarbxylase"/>
</dbReference>
<dbReference type="InterPro" id="IPR033175">
    <property type="entry name" value="PSD-A"/>
</dbReference>
<dbReference type="NCBIfam" id="NF003678">
    <property type="entry name" value="PRK05305.1-2"/>
    <property type="match status" value="1"/>
</dbReference>
<dbReference type="PANTHER" id="PTHR35809">
    <property type="entry name" value="ARCHAETIDYLSERINE DECARBOXYLASE PROENZYME-RELATED"/>
    <property type="match status" value="1"/>
</dbReference>
<dbReference type="PANTHER" id="PTHR35809:SF1">
    <property type="entry name" value="ARCHAETIDYLSERINE DECARBOXYLASE PROENZYME-RELATED"/>
    <property type="match status" value="1"/>
</dbReference>
<dbReference type="Pfam" id="PF02666">
    <property type="entry name" value="PS_Dcarbxylase"/>
    <property type="match status" value="1"/>
</dbReference>